<protein>
    <recommendedName>
        <fullName>Twinfilin</fullName>
    </recommendedName>
</protein>
<dbReference type="EMBL" id="AAAB01008844">
    <property type="protein sequence ID" value="EAA06058.2"/>
    <property type="molecule type" value="Genomic_DNA"/>
</dbReference>
<dbReference type="RefSeq" id="XP_310246.2">
    <property type="nucleotide sequence ID" value="XM_310246.6"/>
</dbReference>
<dbReference type="SMR" id="Q7QG28"/>
<dbReference type="FunCoup" id="Q7QG28">
    <property type="interactions" value="1086"/>
</dbReference>
<dbReference type="STRING" id="7165.Q7QG28"/>
<dbReference type="PaxDb" id="7165-AGAP003716-PA"/>
<dbReference type="EnsemblMetazoa" id="AGAP003716-RA">
    <property type="protein sequence ID" value="AGAP003716-PA"/>
    <property type="gene ID" value="AGAP003716"/>
</dbReference>
<dbReference type="VEuPathDB" id="VectorBase:AGAMI1_002477"/>
<dbReference type="VEuPathDB" id="VectorBase:AGAP003716"/>
<dbReference type="eggNOG" id="KOG1747">
    <property type="taxonomic scope" value="Eukaryota"/>
</dbReference>
<dbReference type="HOGENOM" id="CLU_031995_0_1_1"/>
<dbReference type="InParanoid" id="Q7QG28"/>
<dbReference type="OMA" id="YLFKHTH"/>
<dbReference type="PhylomeDB" id="Q7QG28"/>
<dbReference type="Proteomes" id="UP000007062">
    <property type="component" value="Chromosome 2R"/>
</dbReference>
<dbReference type="GO" id="GO:0005884">
    <property type="term" value="C:actin filament"/>
    <property type="evidence" value="ECO:0000318"/>
    <property type="project" value="GO_Central"/>
</dbReference>
<dbReference type="GO" id="GO:0005938">
    <property type="term" value="C:cell cortex"/>
    <property type="evidence" value="ECO:0007669"/>
    <property type="project" value="UniProtKB-SubCell"/>
</dbReference>
<dbReference type="GO" id="GO:0005737">
    <property type="term" value="C:cytoplasm"/>
    <property type="evidence" value="ECO:0000318"/>
    <property type="project" value="GO_Central"/>
</dbReference>
<dbReference type="GO" id="GO:0030016">
    <property type="term" value="C:myofibril"/>
    <property type="evidence" value="ECO:0000318"/>
    <property type="project" value="GO_Central"/>
</dbReference>
<dbReference type="GO" id="GO:0051015">
    <property type="term" value="F:actin filament binding"/>
    <property type="evidence" value="ECO:0000318"/>
    <property type="project" value="GO_Central"/>
</dbReference>
<dbReference type="GO" id="GO:0003785">
    <property type="term" value="F:actin monomer binding"/>
    <property type="evidence" value="ECO:0000318"/>
    <property type="project" value="GO_Central"/>
</dbReference>
<dbReference type="GO" id="GO:0030042">
    <property type="term" value="P:actin filament depolymerization"/>
    <property type="evidence" value="ECO:0000318"/>
    <property type="project" value="GO_Central"/>
</dbReference>
<dbReference type="GO" id="GO:0051016">
    <property type="term" value="P:barbed-end actin filament capping"/>
    <property type="evidence" value="ECO:0000318"/>
    <property type="project" value="GO_Central"/>
</dbReference>
<dbReference type="GO" id="GO:0010976">
    <property type="term" value="P:positive regulation of neuron projection development"/>
    <property type="evidence" value="ECO:0000318"/>
    <property type="project" value="GO_Central"/>
</dbReference>
<dbReference type="GO" id="GO:0010591">
    <property type="term" value="P:regulation of lamellipodium assembly"/>
    <property type="evidence" value="ECO:0000318"/>
    <property type="project" value="GO_Central"/>
</dbReference>
<dbReference type="CDD" id="cd11284">
    <property type="entry name" value="ADF_Twf-C_like"/>
    <property type="match status" value="1"/>
</dbReference>
<dbReference type="CDD" id="cd11285">
    <property type="entry name" value="ADF_Twf-N_like"/>
    <property type="match status" value="1"/>
</dbReference>
<dbReference type="FunFam" id="3.40.20.10:FF:000042">
    <property type="entry name" value="Actin depolymerizing protein"/>
    <property type="match status" value="1"/>
</dbReference>
<dbReference type="FunFam" id="3.40.20.10:FF:000007">
    <property type="entry name" value="Twinfilin-1 isoform 1"/>
    <property type="match status" value="1"/>
</dbReference>
<dbReference type="Gene3D" id="3.40.20.10">
    <property type="entry name" value="Severin"/>
    <property type="match status" value="2"/>
</dbReference>
<dbReference type="InterPro" id="IPR002108">
    <property type="entry name" value="ADF-H"/>
</dbReference>
<dbReference type="InterPro" id="IPR029006">
    <property type="entry name" value="ADF-H/Gelsolin-like_dom_sf"/>
</dbReference>
<dbReference type="InterPro" id="IPR028458">
    <property type="entry name" value="Twinfilin"/>
</dbReference>
<dbReference type="PANTHER" id="PTHR13759">
    <property type="entry name" value="TWINFILIN"/>
    <property type="match status" value="1"/>
</dbReference>
<dbReference type="PANTHER" id="PTHR13759:SF1">
    <property type="entry name" value="TWINFILIN"/>
    <property type="match status" value="1"/>
</dbReference>
<dbReference type="Pfam" id="PF00241">
    <property type="entry name" value="Cofilin_ADF"/>
    <property type="match status" value="2"/>
</dbReference>
<dbReference type="SMART" id="SM00102">
    <property type="entry name" value="ADF"/>
    <property type="match status" value="2"/>
</dbReference>
<dbReference type="SUPFAM" id="SSF55753">
    <property type="entry name" value="Actin depolymerizing proteins"/>
    <property type="match status" value="2"/>
</dbReference>
<dbReference type="PROSITE" id="PS51263">
    <property type="entry name" value="ADF_H"/>
    <property type="match status" value="2"/>
</dbReference>
<evidence type="ECO:0000250" key="1"/>
<evidence type="ECO:0000255" key="2">
    <source>
        <dbReference type="PROSITE-ProRule" id="PRU00599"/>
    </source>
</evidence>
<evidence type="ECO:0000256" key="3">
    <source>
        <dbReference type="SAM" id="MobiDB-lite"/>
    </source>
</evidence>
<evidence type="ECO:0000305" key="4"/>
<comment type="function">
    <text evidence="1">Actin-binding protein involved in motile and morphological processes. Inhibits actin polymerization, likely by sequestering G-actin (By similarity).</text>
</comment>
<comment type="subunit">
    <text evidence="1">Interacts with G-actin; ADP-actin form.</text>
</comment>
<comment type="subcellular location">
    <subcellularLocation>
        <location evidence="1">Cytoplasm</location>
        <location evidence="1">Cytoskeleton</location>
    </subcellularLocation>
    <subcellularLocation>
        <location evidence="1">Cytoplasm</location>
        <location evidence="1">Cell cortex</location>
    </subcellularLocation>
</comment>
<comment type="similarity">
    <text evidence="4">Belongs to the actin-binding proteins ADF family. Twinfilin subfamily.</text>
</comment>
<accession>Q7QG28</accession>
<proteinExistence type="inferred from homology"/>
<feature type="chain" id="PRO_0000308811" description="Twinfilin">
    <location>
        <begin position="1"/>
        <end position="343"/>
    </location>
</feature>
<feature type="domain" description="ADF-H 1" evidence="2">
    <location>
        <begin position="4"/>
        <end position="139"/>
    </location>
</feature>
<feature type="domain" description="ADF-H 2" evidence="2">
    <location>
        <begin position="177"/>
        <end position="312"/>
    </location>
</feature>
<feature type="region of interest" description="Disordered" evidence="3">
    <location>
        <begin position="314"/>
        <end position="343"/>
    </location>
</feature>
<keyword id="KW-0009">Actin-binding</keyword>
<keyword id="KW-0963">Cytoplasm</keyword>
<keyword id="KW-0206">Cytoskeleton</keyword>
<keyword id="KW-1185">Reference proteome</keyword>
<keyword id="KW-0677">Repeat</keyword>
<gene>
    <name type="primary">twf</name>
    <name type="ORF">AGAP003716</name>
</gene>
<sequence length="343" mass="39282">MSHQTGIKANAELLKFFGKCKDGKTRVLKVSIENEELRLVSHSDVKRDWEKDYDTLVRPLIEESTPCYILYRLDYKIPTGYAWLLMSWVPESATVRQKMLYASTKATLKLEFGSGHIKEELNATSKEETTLQGYQKHKVDFNTPAPLTSREEELAELRKTEVKTDFGIDTKQQTLGGINCPIADAVAQALHDMRRGGYNYLQFRIDLEEEKIHLVKADNIELTGLPAQIPTDHARYHLYIFKHHHEGNYLESVVFVYSMPGYSCSIRERMMYSSCKGPFSATIEKHGIQVAKKLEIDNGAELTEEFLHEELHPRKLNLRPQFSKPKGPPSRGAKRLTKPQAVE</sequence>
<reference key="1">
    <citation type="journal article" date="2002" name="Science">
        <title>The genome sequence of the malaria mosquito Anopheles gambiae.</title>
        <authorList>
            <person name="Holt R.A."/>
            <person name="Subramanian G.M."/>
            <person name="Halpern A."/>
            <person name="Sutton G.G."/>
            <person name="Charlab R."/>
            <person name="Nusskern D.R."/>
            <person name="Wincker P."/>
            <person name="Clark A.G."/>
            <person name="Ribeiro J.M.C."/>
            <person name="Wides R."/>
            <person name="Salzberg S.L."/>
            <person name="Loftus B.J."/>
            <person name="Yandell M.D."/>
            <person name="Majoros W.H."/>
            <person name="Rusch D.B."/>
            <person name="Lai Z."/>
            <person name="Kraft C.L."/>
            <person name="Abril J.F."/>
            <person name="Anthouard V."/>
            <person name="Arensburger P."/>
            <person name="Atkinson P.W."/>
            <person name="Baden H."/>
            <person name="de Berardinis V."/>
            <person name="Baldwin D."/>
            <person name="Benes V."/>
            <person name="Biedler J."/>
            <person name="Blass C."/>
            <person name="Bolanos R."/>
            <person name="Boscus D."/>
            <person name="Barnstead M."/>
            <person name="Cai S."/>
            <person name="Center A."/>
            <person name="Chaturverdi K."/>
            <person name="Christophides G.K."/>
            <person name="Chrystal M.A.M."/>
            <person name="Clamp M."/>
            <person name="Cravchik A."/>
            <person name="Curwen V."/>
            <person name="Dana A."/>
            <person name="Delcher A."/>
            <person name="Dew I."/>
            <person name="Evans C.A."/>
            <person name="Flanigan M."/>
            <person name="Grundschober-Freimoser A."/>
            <person name="Friedli L."/>
            <person name="Gu Z."/>
            <person name="Guan P."/>
            <person name="Guigo R."/>
            <person name="Hillenmeyer M.E."/>
            <person name="Hladun S.L."/>
            <person name="Hogan J.R."/>
            <person name="Hong Y.S."/>
            <person name="Hoover J."/>
            <person name="Jaillon O."/>
            <person name="Ke Z."/>
            <person name="Kodira C.D."/>
            <person name="Kokoza E."/>
            <person name="Koutsos A."/>
            <person name="Letunic I."/>
            <person name="Levitsky A.A."/>
            <person name="Liang Y."/>
            <person name="Lin J.-J."/>
            <person name="Lobo N.F."/>
            <person name="Lopez J.R."/>
            <person name="Malek J.A."/>
            <person name="McIntosh T.C."/>
            <person name="Meister S."/>
            <person name="Miller J.R."/>
            <person name="Mobarry C."/>
            <person name="Mongin E."/>
            <person name="Murphy S.D."/>
            <person name="O'Brochta D.A."/>
            <person name="Pfannkoch C."/>
            <person name="Qi R."/>
            <person name="Regier M.A."/>
            <person name="Remington K."/>
            <person name="Shao H."/>
            <person name="Sharakhova M.V."/>
            <person name="Sitter C.D."/>
            <person name="Shetty J."/>
            <person name="Smith T.J."/>
            <person name="Strong R."/>
            <person name="Sun J."/>
            <person name="Thomasova D."/>
            <person name="Ton L.Q."/>
            <person name="Topalis P."/>
            <person name="Tu Z.J."/>
            <person name="Unger M.F."/>
            <person name="Walenz B."/>
            <person name="Wang A.H."/>
            <person name="Wang J."/>
            <person name="Wang M."/>
            <person name="Wang X."/>
            <person name="Woodford K.J."/>
            <person name="Wortman J.R."/>
            <person name="Wu M."/>
            <person name="Yao A."/>
            <person name="Zdobnov E.M."/>
            <person name="Zhang H."/>
            <person name="Zhao Q."/>
            <person name="Zhao S."/>
            <person name="Zhu S.C."/>
            <person name="Zhimulev I."/>
            <person name="Coluzzi M."/>
            <person name="della Torre A."/>
            <person name="Roth C.W."/>
            <person name="Louis C."/>
            <person name="Kalush F."/>
            <person name="Mural R.J."/>
            <person name="Myers E.W."/>
            <person name="Adams M.D."/>
            <person name="Smith H.O."/>
            <person name="Broder S."/>
            <person name="Gardner M.J."/>
            <person name="Fraser C.M."/>
            <person name="Birney E."/>
            <person name="Bork P."/>
            <person name="Brey P.T."/>
            <person name="Venter J.C."/>
            <person name="Weissenbach J."/>
            <person name="Kafatos F.C."/>
            <person name="Collins F.H."/>
            <person name="Hoffman S.L."/>
        </authorList>
    </citation>
    <scope>NUCLEOTIDE SEQUENCE [LARGE SCALE GENOMIC DNA]</scope>
    <source>
        <strain>PEST</strain>
    </source>
</reference>
<organism>
    <name type="scientific">Anopheles gambiae</name>
    <name type="common">African malaria mosquito</name>
    <dbReference type="NCBI Taxonomy" id="7165"/>
    <lineage>
        <taxon>Eukaryota</taxon>
        <taxon>Metazoa</taxon>
        <taxon>Ecdysozoa</taxon>
        <taxon>Arthropoda</taxon>
        <taxon>Hexapoda</taxon>
        <taxon>Insecta</taxon>
        <taxon>Pterygota</taxon>
        <taxon>Neoptera</taxon>
        <taxon>Endopterygota</taxon>
        <taxon>Diptera</taxon>
        <taxon>Nematocera</taxon>
        <taxon>Culicoidea</taxon>
        <taxon>Culicidae</taxon>
        <taxon>Anophelinae</taxon>
        <taxon>Anopheles</taxon>
    </lineage>
</organism>
<name>TWF_ANOGA</name>